<keyword id="KW-0878">Amphibian defense peptide</keyword>
<keyword id="KW-1222">Bradykinin receptor impairing toxin</keyword>
<keyword id="KW-0903">Direct protein sequencing</keyword>
<keyword id="KW-1213">G-protein coupled receptor impairing toxin</keyword>
<keyword id="KW-0379">Hydroxylation</keyword>
<keyword id="KW-0964">Secreted</keyword>
<keyword id="KW-0765">Sulfation</keyword>
<keyword id="KW-0800">Toxin</keyword>
<dbReference type="GO" id="GO:0005576">
    <property type="term" value="C:extracellular region"/>
    <property type="evidence" value="ECO:0000314"/>
    <property type="project" value="UniProtKB"/>
</dbReference>
<dbReference type="GO" id="GO:0090729">
    <property type="term" value="F:toxin activity"/>
    <property type="evidence" value="ECO:0007669"/>
    <property type="project" value="UniProtKB-KW"/>
</dbReference>
<dbReference type="GO" id="GO:0006952">
    <property type="term" value="P:defense response"/>
    <property type="evidence" value="ECO:0007669"/>
    <property type="project" value="UniProtKB-KW"/>
</dbReference>
<comment type="function">
    <text evidence="1">May produce in vitro relaxation of rat arterial smooth muscle and constriction of intestinal smooth muscle. May target bradykinin receptors (BDKRB).</text>
</comment>
<comment type="subcellular location">
    <subcellularLocation>
        <location evidence="2">Secreted</location>
    </subcellularLocation>
</comment>
<comment type="tissue specificity">
    <text evidence="5">Expressed by the skin glands.</text>
</comment>
<comment type="mass spectrometry">
    <text>[Thr6]-Phyllokinin.</text>
</comment>
<comment type="mass spectrometry">
    <text>[Hyp3,Thr6]-Phyllokinin.</text>
</comment>
<comment type="mass spectrometry">
    <text>[Thr6]-Phyllokinin, sulfated.</text>
</comment>
<comment type="mass spectrometry">
    <text>[Hyp3,Thr6]-Phyllokinin, sulfated.</text>
</comment>
<comment type="similarity">
    <text evidence="4">Belongs to the bradykinin-related peptide family.</text>
</comment>
<protein>
    <recommendedName>
        <fullName evidence="3">[Thr6]-phyllokinin</fullName>
    </recommendedName>
</protein>
<evidence type="ECO:0000250" key="1">
    <source>
        <dbReference type="UniProtKB" id="L0PIN3"/>
    </source>
</evidence>
<evidence type="ECO:0000269" key="2">
    <source>
    </source>
</evidence>
<evidence type="ECO:0000303" key="3">
    <source>
    </source>
</evidence>
<evidence type="ECO:0000305" key="4"/>
<evidence type="ECO:0000305" key="5">
    <source>
    </source>
</evidence>
<reference evidence="4" key="1">
    <citation type="journal article" date="2015" name="Rapid Commun. Mass Spectrom.">
        <title>Skin secretion peptides: the molecular facet of the deimatic behavior of the four-eyed frog, Physalaemus nattereri (Anura, Leptodactylidae).</title>
        <authorList>
            <person name="Barbosa E.A."/>
            <person name="Iembo T."/>
            <person name="Martins G.R."/>
            <person name="Silva L.P."/>
            <person name="Prates M.V."/>
            <person name="Andrade A.C."/>
            <person name="Bloch C. Jr."/>
        </authorList>
    </citation>
    <scope>PROTEIN SEQUENCE</scope>
    <scope>SUBCELLULAR LOCATION</scope>
    <scope>MASS SPECTROMETRY</scope>
    <scope>HYDROXYLATION AT PRO-3</scope>
    <scope>SULFATION AT TYR-11</scope>
    <scope>IDENTIFICATION BY MASS SPECTROMETRY</scope>
    <source>
        <tissue evidence="3">Skin secretion</tissue>
    </source>
</reference>
<accession>C0HKA7</accession>
<feature type="peptide" id="PRO_0000438957" description="[Thr6]-phyllokinin" evidence="2">
    <location>
        <begin position="1"/>
        <end position="11"/>
    </location>
</feature>
<feature type="modified residue" description="4-hydroxyproline; in form [Hyp3,Thr6]-Phyllokinin" evidence="2">
    <location>
        <position position="3"/>
    </location>
</feature>
<feature type="modified residue" description="Sulfotyrosine; partial; in form [Thr6]-Phyllokinin and [Hyp3,Thr6]-Phyllokinin" evidence="2">
    <location>
        <position position="11"/>
    </location>
</feature>
<name>BRKP3_PHYNA</name>
<sequence>RPPGFTPFRIY</sequence>
<proteinExistence type="evidence at protein level"/>
<organism evidence="3">
    <name type="scientific">Physalaemus nattereri</name>
    <name type="common">Cuyaba dwarf frog</name>
    <name type="synonym">Eupemphix nattereri</name>
    <dbReference type="NCBI Taxonomy" id="248869"/>
    <lineage>
        <taxon>Eukaryota</taxon>
        <taxon>Metazoa</taxon>
        <taxon>Chordata</taxon>
        <taxon>Craniata</taxon>
        <taxon>Vertebrata</taxon>
        <taxon>Euteleostomi</taxon>
        <taxon>Amphibia</taxon>
        <taxon>Batrachia</taxon>
        <taxon>Anura</taxon>
        <taxon>Neobatrachia</taxon>
        <taxon>Hyloidea</taxon>
        <taxon>Leptodactylidae</taxon>
        <taxon>Leiuperinae</taxon>
        <taxon>Physalaemus</taxon>
    </lineage>
</organism>